<reference key="1">
    <citation type="journal article" date="2011" name="Science">
        <title>Comparative functional genomics of the fission yeasts.</title>
        <authorList>
            <person name="Rhind N."/>
            <person name="Chen Z."/>
            <person name="Yassour M."/>
            <person name="Thompson D.A."/>
            <person name="Haas B.J."/>
            <person name="Habib N."/>
            <person name="Wapinski I."/>
            <person name="Roy S."/>
            <person name="Lin M.F."/>
            <person name="Heiman D.I."/>
            <person name="Young S.K."/>
            <person name="Furuya K."/>
            <person name="Guo Y."/>
            <person name="Pidoux A."/>
            <person name="Chen H.M."/>
            <person name="Robbertse B."/>
            <person name="Goldberg J.M."/>
            <person name="Aoki K."/>
            <person name="Bayne E.H."/>
            <person name="Berlin A.M."/>
            <person name="Desjardins C.A."/>
            <person name="Dobbs E."/>
            <person name="Dukaj L."/>
            <person name="Fan L."/>
            <person name="FitzGerald M.G."/>
            <person name="French C."/>
            <person name="Gujja S."/>
            <person name="Hansen K."/>
            <person name="Keifenheim D."/>
            <person name="Levin J.Z."/>
            <person name="Mosher R.A."/>
            <person name="Mueller C.A."/>
            <person name="Pfiffner J."/>
            <person name="Priest M."/>
            <person name="Russ C."/>
            <person name="Smialowska A."/>
            <person name="Swoboda P."/>
            <person name="Sykes S.M."/>
            <person name="Vaughn M."/>
            <person name="Vengrova S."/>
            <person name="Yoder R."/>
            <person name="Zeng Q."/>
            <person name="Allshire R."/>
            <person name="Baulcombe D."/>
            <person name="Birren B.W."/>
            <person name="Brown W."/>
            <person name="Ekwall K."/>
            <person name="Kellis M."/>
            <person name="Leatherwood J."/>
            <person name="Levin H."/>
            <person name="Margalit H."/>
            <person name="Martienssen R."/>
            <person name="Nieduszynski C.A."/>
            <person name="Spatafora J.W."/>
            <person name="Friedman N."/>
            <person name="Dalgaard J.Z."/>
            <person name="Baumann P."/>
            <person name="Niki H."/>
            <person name="Regev A."/>
            <person name="Nusbaum C."/>
        </authorList>
    </citation>
    <scope>NUCLEOTIDE SEQUENCE [LARGE SCALE GENOMIC DNA]</scope>
    <source>
        <strain>yFS275 / FY16936</strain>
    </source>
</reference>
<keyword id="KW-0143">Chaperone</keyword>
<keyword id="KW-0496">Mitochondrion</keyword>
<keyword id="KW-1185">Reference proteome</keyword>
<evidence type="ECO:0000255" key="1">
    <source>
        <dbReference type="HAMAP-Rule" id="MF_03057"/>
    </source>
</evidence>
<feature type="chain" id="PRO_0000383199" description="Succinate dehydrogenase assembly factor 2, mitochondrial">
    <location>
        <begin position="1"/>
        <end position="143"/>
    </location>
</feature>
<sequence>MFSIKSIQLCRYFSRKSGVLRYWHSAPYLTHSKLLEDKLIRPVDRSKETEKLLRSRLVYQSRKRGILETDLILSGFAKEYLSKYNVELLKEYDNLLNEADWDILYWCTGERQAPEHWLNSRVLRDLKEYLSSKNGVVRFMPEL</sequence>
<comment type="function">
    <text evidence="1">Plays an essential role in the assembly of succinate dehydrogenase (SDH), an enzyme complex (also referred to as respiratory complex II) that is a component of both the tricarboxylic acid (TCA) cycle and the mitochondrial electron transport chain, and which couples the oxidation of succinate to fumarate with the reduction of ubiquinone (coenzyme Q) to ubiquinol. Required for flavinylation (covalent attachment of FAD) of the flavoprotein subunit of the SDH catalytic dimer.</text>
</comment>
<comment type="subunit">
    <text evidence="1">Interacts with the flavoprotein subunit within the SDH catalytic dimer.</text>
</comment>
<comment type="subcellular location">
    <subcellularLocation>
        <location evidence="1">Mitochondrion matrix</location>
    </subcellularLocation>
</comment>
<comment type="miscellaneous">
    <text evidence="1">This protein may be expected to contain an N-terminal transit peptide but none has been predicted.</text>
</comment>
<comment type="similarity">
    <text evidence="1">Belongs to the SDHAF2 family.</text>
</comment>
<dbReference type="EMBL" id="KE651168">
    <property type="protein sequence ID" value="EEB06838.1"/>
    <property type="molecule type" value="Genomic_DNA"/>
</dbReference>
<dbReference type="RefSeq" id="XP_002173131.1">
    <property type="nucleotide sequence ID" value="XM_002173095.2"/>
</dbReference>
<dbReference type="SMR" id="B6JZ70"/>
<dbReference type="STRING" id="402676.B6JZ70"/>
<dbReference type="EnsemblFungi" id="EEB06838">
    <property type="protein sequence ID" value="EEB06838"/>
    <property type="gene ID" value="SJAG_01895"/>
</dbReference>
<dbReference type="GeneID" id="7048075"/>
<dbReference type="JaponicusDB" id="SJAG_01895">
    <property type="gene designation" value="emi5"/>
</dbReference>
<dbReference type="VEuPathDB" id="FungiDB:SJAG_01895"/>
<dbReference type="eggNOG" id="KOG3326">
    <property type="taxonomic scope" value="Eukaryota"/>
</dbReference>
<dbReference type="HOGENOM" id="CLU_103054_0_1_1"/>
<dbReference type="OMA" id="HMEWDLF"/>
<dbReference type="OrthoDB" id="4215474at2759"/>
<dbReference type="Proteomes" id="UP000001744">
    <property type="component" value="Unassembled WGS sequence"/>
</dbReference>
<dbReference type="GO" id="GO:0005759">
    <property type="term" value="C:mitochondrial matrix"/>
    <property type="evidence" value="ECO:0000250"/>
    <property type="project" value="UniProtKB"/>
</dbReference>
<dbReference type="GO" id="GO:0005739">
    <property type="term" value="C:mitochondrion"/>
    <property type="evidence" value="ECO:0000318"/>
    <property type="project" value="GO_Central"/>
</dbReference>
<dbReference type="GO" id="GO:0006121">
    <property type="term" value="P:mitochondrial electron transport, succinate to ubiquinone"/>
    <property type="evidence" value="ECO:0000250"/>
    <property type="project" value="UniProtKB"/>
</dbReference>
<dbReference type="GO" id="GO:0034553">
    <property type="term" value="P:mitochondrial respiratory chain complex II assembly"/>
    <property type="evidence" value="ECO:0000318"/>
    <property type="project" value="GO_Central"/>
</dbReference>
<dbReference type="GO" id="GO:0018293">
    <property type="term" value="P:protein-FAD linkage"/>
    <property type="evidence" value="ECO:0000250"/>
    <property type="project" value="UniProtKB"/>
</dbReference>
<dbReference type="GO" id="GO:0006099">
    <property type="term" value="P:tricarboxylic acid cycle"/>
    <property type="evidence" value="ECO:0000318"/>
    <property type="project" value="GO_Central"/>
</dbReference>
<dbReference type="FunFam" id="1.10.150.250:FF:000002">
    <property type="entry name" value="Succinate dehydrogenase assembly factor 2, mitochondrial"/>
    <property type="match status" value="1"/>
</dbReference>
<dbReference type="Gene3D" id="1.10.150.250">
    <property type="entry name" value="Flavinator of succinate dehydrogenase"/>
    <property type="match status" value="1"/>
</dbReference>
<dbReference type="HAMAP" id="MF_03057">
    <property type="entry name" value="SDHAF2"/>
    <property type="match status" value="1"/>
</dbReference>
<dbReference type="InterPro" id="IPR005631">
    <property type="entry name" value="SDH"/>
</dbReference>
<dbReference type="InterPro" id="IPR036714">
    <property type="entry name" value="SDH_sf"/>
</dbReference>
<dbReference type="InterPro" id="IPR028882">
    <property type="entry name" value="SDHAF2"/>
</dbReference>
<dbReference type="PANTHER" id="PTHR12469">
    <property type="entry name" value="PROTEIN EMI5 HOMOLOG, MITOCHONDRIAL"/>
    <property type="match status" value="1"/>
</dbReference>
<dbReference type="PANTHER" id="PTHR12469:SF2">
    <property type="entry name" value="SUCCINATE DEHYDROGENASE ASSEMBLY FACTOR 2, MITOCHONDRIAL"/>
    <property type="match status" value="1"/>
</dbReference>
<dbReference type="Pfam" id="PF03937">
    <property type="entry name" value="Sdh5"/>
    <property type="match status" value="1"/>
</dbReference>
<dbReference type="SUPFAM" id="SSF109910">
    <property type="entry name" value="YgfY-like"/>
    <property type="match status" value="1"/>
</dbReference>
<proteinExistence type="inferred from homology"/>
<name>SDHF2_SCHJY</name>
<accession>B6JZ70</accession>
<gene>
    <name type="ORF">SJAG_01895</name>
</gene>
<organism>
    <name type="scientific">Schizosaccharomyces japonicus (strain yFS275 / FY16936)</name>
    <name type="common">Fission yeast</name>
    <dbReference type="NCBI Taxonomy" id="402676"/>
    <lineage>
        <taxon>Eukaryota</taxon>
        <taxon>Fungi</taxon>
        <taxon>Dikarya</taxon>
        <taxon>Ascomycota</taxon>
        <taxon>Taphrinomycotina</taxon>
        <taxon>Schizosaccharomycetes</taxon>
        <taxon>Schizosaccharomycetales</taxon>
        <taxon>Schizosaccharomycetaceae</taxon>
        <taxon>Schizosaccharomyces</taxon>
    </lineage>
</organism>
<protein>
    <recommendedName>
        <fullName evidence="1">Succinate dehydrogenase assembly factor 2, mitochondrial</fullName>
        <shortName evidence="1">SDH assembly factor 2</shortName>
        <shortName evidence="1">SDHAF2</shortName>
    </recommendedName>
</protein>